<evidence type="ECO:0000255" key="1">
    <source>
        <dbReference type="HAMAP-Rule" id="MF_01005"/>
    </source>
</evidence>
<sequence length="249" mass="27111">MSIVMQLQDVAESTRLGPLSGEVRAGEILHLVGPNGAGKSTLLARMAGMTSGKGSIQFAGQPLEAWSATKLALHRAYLSQQQTPPFAMPVWHYLTLHQHDKTRTELLNDVAGALALDDKLGRSTNQLSGGEWQRVRLAAVVLQITPQANPAGQLLLLDEPMNSLDVAQQSALDKILSALCQQGLAIVMSSHDLNHTLRHAHRAWLLKGGKMLASGRREEVLTPPNLAQAYGMNFRRLDIEGHRMLISTI</sequence>
<comment type="function">
    <text evidence="1">Part of the ABC transporter complex BtuCDF involved in vitamin B12 import. Responsible for energy coupling to the transport system.</text>
</comment>
<comment type="catalytic activity">
    <reaction evidence="1">
        <text>an R-cob(III)alamin(out) + ATP + H2O = an R-cob(III)alamin(in) + ADP + phosphate + H(+)</text>
        <dbReference type="Rhea" id="RHEA:17873"/>
        <dbReference type="ChEBI" id="CHEBI:15377"/>
        <dbReference type="ChEBI" id="CHEBI:15378"/>
        <dbReference type="ChEBI" id="CHEBI:30616"/>
        <dbReference type="ChEBI" id="CHEBI:43474"/>
        <dbReference type="ChEBI" id="CHEBI:140785"/>
        <dbReference type="ChEBI" id="CHEBI:456216"/>
        <dbReference type="EC" id="7.6.2.8"/>
    </reaction>
</comment>
<comment type="subunit">
    <text evidence="1">The complex is composed of two ATP-binding proteins (BtuD), two transmembrane proteins (BtuC) and a solute-binding protein (BtuF).</text>
</comment>
<comment type="subcellular location">
    <subcellularLocation>
        <location evidence="1">Cell inner membrane</location>
        <topology evidence="1">Peripheral membrane protein</topology>
    </subcellularLocation>
</comment>
<comment type="similarity">
    <text evidence="1">Belongs to the ABC transporter superfamily. Vitamin B12 importer (TC 3.A.1.13.1) family.</text>
</comment>
<proteinExistence type="inferred from homology"/>
<protein>
    <recommendedName>
        <fullName evidence="1">Vitamin B12 import ATP-binding protein BtuD</fullName>
        <ecNumber evidence="1">7.6.2.8</ecNumber>
    </recommendedName>
    <alternativeName>
        <fullName evidence="1">Vitamin B12-transporting ATPase</fullName>
    </alternativeName>
</protein>
<name>BTUD_ECOLU</name>
<reference key="1">
    <citation type="journal article" date="2009" name="PLoS Genet.">
        <title>Organised genome dynamics in the Escherichia coli species results in highly diverse adaptive paths.</title>
        <authorList>
            <person name="Touchon M."/>
            <person name="Hoede C."/>
            <person name="Tenaillon O."/>
            <person name="Barbe V."/>
            <person name="Baeriswyl S."/>
            <person name="Bidet P."/>
            <person name="Bingen E."/>
            <person name="Bonacorsi S."/>
            <person name="Bouchier C."/>
            <person name="Bouvet O."/>
            <person name="Calteau A."/>
            <person name="Chiapello H."/>
            <person name="Clermont O."/>
            <person name="Cruveiller S."/>
            <person name="Danchin A."/>
            <person name="Diard M."/>
            <person name="Dossat C."/>
            <person name="Karoui M.E."/>
            <person name="Frapy E."/>
            <person name="Garry L."/>
            <person name="Ghigo J.M."/>
            <person name="Gilles A.M."/>
            <person name="Johnson J."/>
            <person name="Le Bouguenec C."/>
            <person name="Lescat M."/>
            <person name="Mangenot S."/>
            <person name="Martinez-Jehanne V."/>
            <person name="Matic I."/>
            <person name="Nassif X."/>
            <person name="Oztas S."/>
            <person name="Petit M.A."/>
            <person name="Pichon C."/>
            <person name="Rouy Z."/>
            <person name="Ruf C.S."/>
            <person name="Schneider D."/>
            <person name="Tourret J."/>
            <person name="Vacherie B."/>
            <person name="Vallenet D."/>
            <person name="Medigue C."/>
            <person name="Rocha E.P.C."/>
            <person name="Denamur E."/>
        </authorList>
    </citation>
    <scope>NUCLEOTIDE SEQUENCE [LARGE SCALE GENOMIC DNA]</scope>
    <source>
        <strain>UMN026 / ExPEC</strain>
    </source>
</reference>
<accession>B7N547</accession>
<keyword id="KW-0067">ATP-binding</keyword>
<keyword id="KW-0997">Cell inner membrane</keyword>
<keyword id="KW-1003">Cell membrane</keyword>
<keyword id="KW-0472">Membrane</keyword>
<keyword id="KW-0547">Nucleotide-binding</keyword>
<keyword id="KW-1278">Translocase</keyword>
<keyword id="KW-0813">Transport</keyword>
<feature type="chain" id="PRO_1000134663" description="Vitamin B12 import ATP-binding protein BtuD">
    <location>
        <begin position="1"/>
        <end position="249"/>
    </location>
</feature>
<feature type="domain" description="ABC transporter" evidence="1">
    <location>
        <begin position="1"/>
        <end position="233"/>
    </location>
</feature>
<feature type="binding site" evidence="1">
    <location>
        <begin position="33"/>
        <end position="40"/>
    </location>
    <ligand>
        <name>ATP</name>
        <dbReference type="ChEBI" id="CHEBI:30616"/>
    </ligand>
</feature>
<organism>
    <name type="scientific">Escherichia coli O17:K52:H18 (strain UMN026 / ExPEC)</name>
    <dbReference type="NCBI Taxonomy" id="585056"/>
    <lineage>
        <taxon>Bacteria</taxon>
        <taxon>Pseudomonadati</taxon>
        <taxon>Pseudomonadota</taxon>
        <taxon>Gammaproteobacteria</taxon>
        <taxon>Enterobacterales</taxon>
        <taxon>Enterobacteriaceae</taxon>
        <taxon>Escherichia</taxon>
    </lineage>
</organism>
<dbReference type="EC" id="7.6.2.8" evidence="1"/>
<dbReference type="EMBL" id="CU928163">
    <property type="protein sequence ID" value="CAR13196.1"/>
    <property type="molecule type" value="Genomic_DNA"/>
</dbReference>
<dbReference type="RefSeq" id="WP_000029466.1">
    <property type="nucleotide sequence ID" value="NC_011751.1"/>
</dbReference>
<dbReference type="RefSeq" id="YP_002412728.1">
    <property type="nucleotide sequence ID" value="NC_011751.1"/>
</dbReference>
<dbReference type="SMR" id="B7N547"/>
<dbReference type="STRING" id="585056.ECUMN_2000"/>
<dbReference type="GeneID" id="93775873"/>
<dbReference type="KEGG" id="eum:ECUMN_2000"/>
<dbReference type="PATRIC" id="fig|585056.7.peg.2185"/>
<dbReference type="HOGENOM" id="CLU_000604_1_11_6"/>
<dbReference type="Proteomes" id="UP000007097">
    <property type="component" value="Chromosome"/>
</dbReference>
<dbReference type="GO" id="GO:0005886">
    <property type="term" value="C:plasma membrane"/>
    <property type="evidence" value="ECO:0007669"/>
    <property type="project" value="UniProtKB-SubCell"/>
</dbReference>
<dbReference type="GO" id="GO:0015420">
    <property type="term" value="F:ABC-type vitamin B12 transporter activity"/>
    <property type="evidence" value="ECO:0007669"/>
    <property type="project" value="UniProtKB-UniRule"/>
</dbReference>
<dbReference type="GO" id="GO:0005524">
    <property type="term" value="F:ATP binding"/>
    <property type="evidence" value="ECO:0007669"/>
    <property type="project" value="UniProtKB-KW"/>
</dbReference>
<dbReference type="GO" id="GO:0016887">
    <property type="term" value="F:ATP hydrolysis activity"/>
    <property type="evidence" value="ECO:0007669"/>
    <property type="project" value="InterPro"/>
</dbReference>
<dbReference type="CDD" id="cd03214">
    <property type="entry name" value="ABC_Iron-Siderophores_B12_Hemin"/>
    <property type="match status" value="1"/>
</dbReference>
<dbReference type="FunFam" id="3.40.50.300:FF:000462">
    <property type="entry name" value="Vitamin B12 import ATP-binding protein BtuD"/>
    <property type="match status" value="1"/>
</dbReference>
<dbReference type="Gene3D" id="3.40.50.300">
    <property type="entry name" value="P-loop containing nucleotide triphosphate hydrolases"/>
    <property type="match status" value="1"/>
</dbReference>
<dbReference type="HAMAP" id="MF_01005">
    <property type="entry name" value="BtuD"/>
    <property type="match status" value="1"/>
</dbReference>
<dbReference type="InterPro" id="IPR003593">
    <property type="entry name" value="AAA+_ATPase"/>
</dbReference>
<dbReference type="InterPro" id="IPR003439">
    <property type="entry name" value="ABC_transporter-like_ATP-bd"/>
</dbReference>
<dbReference type="InterPro" id="IPR017871">
    <property type="entry name" value="ABC_transporter-like_CS"/>
</dbReference>
<dbReference type="InterPro" id="IPR023693">
    <property type="entry name" value="ABC_transptr_BtuD"/>
</dbReference>
<dbReference type="InterPro" id="IPR050153">
    <property type="entry name" value="Metal_Ion_Import_ABC"/>
</dbReference>
<dbReference type="InterPro" id="IPR027417">
    <property type="entry name" value="P-loop_NTPase"/>
</dbReference>
<dbReference type="NCBIfam" id="NF002981">
    <property type="entry name" value="PRK03695.1"/>
    <property type="match status" value="1"/>
</dbReference>
<dbReference type="PANTHER" id="PTHR42734">
    <property type="entry name" value="METAL TRANSPORT SYSTEM ATP-BINDING PROTEIN TM_0124-RELATED"/>
    <property type="match status" value="1"/>
</dbReference>
<dbReference type="PANTHER" id="PTHR42734:SF18">
    <property type="entry name" value="VITAMIN B12 IMPORT ATP-BINDING PROTEIN BTUD"/>
    <property type="match status" value="1"/>
</dbReference>
<dbReference type="Pfam" id="PF00005">
    <property type="entry name" value="ABC_tran"/>
    <property type="match status" value="1"/>
</dbReference>
<dbReference type="SMART" id="SM00382">
    <property type="entry name" value="AAA"/>
    <property type="match status" value="1"/>
</dbReference>
<dbReference type="SUPFAM" id="SSF52540">
    <property type="entry name" value="P-loop containing nucleoside triphosphate hydrolases"/>
    <property type="match status" value="1"/>
</dbReference>
<dbReference type="PROSITE" id="PS00211">
    <property type="entry name" value="ABC_TRANSPORTER_1"/>
    <property type="match status" value="1"/>
</dbReference>
<dbReference type="PROSITE" id="PS50893">
    <property type="entry name" value="ABC_TRANSPORTER_2"/>
    <property type="match status" value="1"/>
</dbReference>
<gene>
    <name evidence="1" type="primary">btuD</name>
    <name type="ordered locus">ECUMN_2000</name>
</gene>